<organism>
    <name type="scientific">Escherichia coli O1:K1 / APEC</name>
    <dbReference type="NCBI Taxonomy" id="405955"/>
    <lineage>
        <taxon>Bacteria</taxon>
        <taxon>Pseudomonadati</taxon>
        <taxon>Pseudomonadota</taxon>
        <taxon>Gammaproteobacteria</taxon>
        <taxon>Enterobacterales</taxon>
        <taxon>Enterobacteriaceae</taxon>
        <taxon>Escherichia</taxon>
    </lineage>
</organism>
<sequence>MSQSICSTGLRWLWLVVVVLIIDLGSKYLILQNFALGDTVPLFPSLNLHYARNYGAAFSFLADSGGWQRWFFAGIAIGISVILAVMMYRSKATQKLNNIAYALIIGGALGNLFDRLWHGFVVDMIDFYVGDWHFATFNLADTAICVGAALIVLEGFLPSKAKKQ</sequence>
<name>LSPA_ECOK1</name>
<reference key="1">
    <citation type="journal article" date="2007" name="J. Bacteriol.">
        <title>The genome sequence of avian pathogenic Escherichia coli strain O1:K1:H7 shares strong similarities with human extraintestinal pathogenic E. coli genomes.</title>
        <authorList>
            <person name="Johnson T.J."/>
            <person name="Kariyawasam S."/>
            <person name="Wannemuehler Y."/>
            <person name="Mangiamele P."/>
            <person name="Johnson S.J."/>
            <person name="Doetkott C."/>
            <person name="Skyberg J.A."/>
            <person name="Lynne A.M."/>
            <person name="Johnson J.R."/>
            <person name="Nolan L.K."/>
        </authorList>
    </citation>
    <scope>NUCLEOTIDE SEQUENCE [LARGE SCALE GENOMIC DNA]</scope>
</reference>
<evidence type="ECO:0000255" key="1">
    <source>
        <dbReference type="HAMAP-Rule" id="MF_00161"/>
    </source>
</evidence>
<dbReference type="EC" id="3.4.23.36" evidence="1"/>
<dbReference type="EMBL" id="CP000468">
    <property type="protein sequence ID" value="ABI99514.1"/>
    <property type="molecule type" value="Genomic_DNA"/>
</dbReference>
<dbReference type="RefSeq" id="WP_000083369.1">
    <property type="nucleotide sequence ID" value="NZ_CADILS010000013.1"/>
</dbReference>
<dbReference type="SMR" id="A1A775"/>
<dbReference type="MEROPS" id="A08.001"/>
<dbReference type="GeneID" id="75169926"/>
<dbReference type="KEGG" id="ecv:APECO1_1956"/>
<dbReference type="HOGENOM" id="CLU_083252_4_0_6"/>
<dbReference type="UniPathway" id="UPA00665"/>
<dbReference type="Proteomes" id="UP000008216">
    <property type="component" value="Chromosome"/>
</dbReference>
<dbReference type="GO" id="GO:0005886">
    <property type="term" value="C:plasma membrane"/>
    <property type="evidence" value="ECO:0007669"/>
    <property type="project" value="UniProtKB-SubCell"/>
</dbReference>
<dbReference type="GO" id="GO:0004190">
    <property type="term" value="F:aspartic-type endopeptidase activity"/>
    <property type="evidence" value="ECO:0007669"/>
    <property type="project" value="UniProtKB-UniRule"/>
</dbReference>
<dbReference type="GO" id="GO:0006508">
    <property type="term" value="P:proteolysis"/>
    <property type="evidence" value="ECO:0007669"/>
    <property type="project" value="UniProtKB-KW"/>
</dbReference>
<dbReference type="HAMAP" id="MF_00161">
    <property type="entry name" value="LspA"/>
    <property type="match status" value="1"/>
</dbReference>
<dbReference type="InterPro" id="IPR001872">
    <property type="entry name" value="Peptidase_A8"/>
</dbReference>
<dbReference type="NCBIfam" id="TIGR00077">
    <property type="entry name" value="lspA"/>
    <property type="match status" value="1"/>
</dbReference>
<dbReference type="PANTHER" id="PTHR33695">
    <property type="entry name" value="LIPOPROTEIN SIGNAL PEPTIDASE"/>
    <property type="match status" value="1"/>
</dbReference>
<dbReference type="PANTHER" id="PTHR33695:SF1">
    <property type="entry name" value="LIPOPROTEIN SIGNAL PEPTIDASE"/>
    <property type="match status" value="1"/>
</dbReference>
<dbReference type="Pfam" id="PF01252">
    <property type="entry name" value="Peptidase_A8"/>
    <property type="match status" value="1"/>
</dbReference>
<dbReference type="PRINTS" id="PR00781">
    <property type="entry name" value="LIPOSIGPTASE"/>
</dbReference>
<dbReference type="PROSITE" id="PS00855">
    <property type="entry name" value="SPASE_II"/>
    <property type="match status" value="1"/>
</dbReference>
<keyword id="KW-0064">Aspartyl protease</keyword>
<keyword id="KW-0997">Cell inner membrane</keyword>
<keyword id="KW-1003">Cell membrane</keyword>
<keyword id="KW-0378">Hydrolase</keyword>
<keyword id="KW-0472">Membrane</keyword>
<keyword id="KW-0645">Protease</keyword>
<keyword id="KW-1185">Reference proteome</keyword>
<keyword id="KW-0812">Transmembrane</keyword>
<keyword id="KW-1133">Transmembrane helix</keyword>
<gene>
    <name evidence="1" type="primary">lspA</name>
    <name type="ordered locus">Ecok1_00210</name>
    <name type="ORF">APECO1_1956</name>
</gene>
<comment type="function">
    <text evidence="1">This protein specifically catalyzes the removal of signal peptides from prolipoproteins.</text>
</comment>
<comment type="catalytic activity">
    <reaction evidence="1">
        <text>Release of signal peptides from bacterial membrane prolipoproteins. Hydrolyzes -Xaa-Yaa-Zaa-|-(S,diacylglyceryl)Cys-, in which Xaa is hydrophobic (preferably Leu), and Yaa (Ala or Ser) and Zaa (Gly or Ala) have small, neutral side chains.</text>
        <dbReference type="EC" id="3.4.23.36"/>
    </reaction>
</comment>
<comment type="pathway">
    <text evidence="1">Protein modification; lipoprotein biosynthesis (signal peptide cleavage).</text>
</comment>
<comment type="subcellular location">
    <subcellularLocation>
        <location evidence="1">Cell inner membrane</location>
        <topology evidence="1">Multi-pass membrane protein</topology>
    </subcellularLocation>
</comment>
<comment type="similarity">
    <text evidence="1">Belongs to the peptidase A8 family.</text>
</comment>
<protein>
    <recommendedName>
        <fullName evidence="1">Lipoprotein signal peptidase</fullName>
        <ecNumber evidence="1">3.4.23.36</ecNumber>
    </recommendedName>
    <alternativeName>
        <fullName evidence="1">Prolipoprotein signal peptidase</fullName>
    </alternativeName>
    <alternativeName>
        <fullName evidence="1">Signal peptidase II</fullName>
        <shortName evidence="1">SPase II</shortName>
    </alternativeName>
</protein>
<accession>A1A775</accession>
<proteinExistence type="inferred from homology"/>
<feature type="chain" id="PRO_0000289377" description="Lipoprotein signal peptidase">
    <location>
        <begin position="1"/>
        <end position="164"/>
    </location>
</feature>
<feature type="transmembrane region" description="Helical" evidence="1">
    <location>
        <begin position="12"/>
        <end position="32"/>
    </location>
</feature>
<feature type="transmembrane region" description="Helical" evidence="1">
    <location>
        <begin position="70"/>
        <end position="90"/>
    </location>
</feature>
<feature type="transmembrane region" description="Helical" evidence="1">
    <location>
        <begin position="102"/>
        <end position="122"/>
    </location>
</feature>
<feature type="transmembrane region" description="Helical" evidence="1">
    <location>
        <begin position="137"/>
        <end position="157"/>
    </location>
</feature>
<feature type="active site" evidence="1">
    <location>
        <position position="123"/>
    </location>
</feature>
<feature type="active site" evidence="1">
    <location>
        <position position="141"/>
    </location>
</feature>